<evidence type="ECO:0000255" key="1">
    <source>
        <dbReference type="HAMAP-Rule" id="MF_00753"/>
    </source>
</evidence>
<organism>
    <name type="scientific">Actinobacillus succinogenes (strain ATCC 55618 / DSM 22257 / CCUG 43843 / 130Z)</name>
    <dbReference type="NCBI Taxonomy" id="339671"/>
    <lineage>
        <taxon>Bacteria</taxon>
        <taxon>Pseudomonadati</taxon>
        <taxon>Pseudomonadota</taxon>
        <taxon>Gammaproteobacteria</taxon>
        <taxon>Pasteurellales</taxon>
        <taxon>Pasteurellaceae</taxon>
        <taxon>Actinobacillus</taxon>
    </lineage>
</organism>
<gene>
    <name evidence="1" type="primary">glpB</name>
    <name type="ordered locus">Asuc_0204</name>
</gene>
<keyword id="KW-0285">Flavoprotein</keyword>
<keyword id="KW-0288">FMN</keyword>
<keyword id="KW-0560">Oxidoreductase</keyword>
<keyword id="KW-1185">Reference proteome</keyword>
<comment type="function">
    <text evidence="1">Conversion of glycerol 3-phosphate to dihydroxyacetone. Uses fumarate or nitrate as electron acceptor.</text>
</comment>
<comment type="catalytic activity">
    <reaction evidence="1">
        <text>a quinone + sn-glycerol 3-phosphate = dihydroxyacetone phosphate + a quinol</text>
        <dbReference type="Rhea" id="RHEA:18977"/>
        <dbReference type="ChEBI" id="CHEBI:24646"/>
        <dbReference type="ChEBI" id="CHEBI:57597"/>
        <dbReference type="ChEBI" id="CHEBI:57642"/>
        <dbReference type="ChEBI" id="CHEBI:132124"/>
        <dbReference type="EC" id="1.1.5.3"/>
    </reaction>
</comment>
<comment type="cofactor">
    <cofactor evidence="1">
        <name>FMN</name>
        <dbReference type="ChEBI" id="CHEBI:58210"/>
    </cofactor>
</comment>
<comment type="pathway">
    <text evidence="1">Polyol metabolism; glycerol degradation via glycerol kinase pathway; glycerone phosphate from sn-glycerol 3-phosphate (anaerobic route): step 1/1.</text>
</comment>
<comment type="subunit">
    <text evidence="1">Composed of a catalytic GlpA/B dimer and of membrane bound GlpC.</text>
</comment>
<comment type="similarity">
    <text evidence="1">Belongs to the anaerobic G-3-P dehydrogenase subunit B family.</text>
</comment>
<proteinExistence type="inferred from homology"/>
<feature type="chain" id="PRO_1000072825" description="Anaerobic glycerol-3-phosphate dehydrogenase subunit B">
    <location>
        <begin position="1"/>
        <end position="430"/>
    </location>
</feature>
<sequence>MNFDVVIIGGGLAGLTCGIALQEQGKRCAIVNNGQAAMDFSTGSIDLLGRLPNGENVQKVDRALAGLSEQLPAHPYAKLGAERVLAKAKQFEGMAAKLNLGLAGSVEQNHARVTPLGGLRRTWLSPDSVPTVRPNEAFPYNNIVILGIEGYHDFQPQLLADNLKLQPQFAHCEIKPGFLTIPELDFLRRQSREFRSVHIAQTLEQKVNPASLINEIRQAASGADVVFLPACFGQNSQAFFNELQAATDFMLFELPTLPPSLLGGRQHNILRQYFERLGGVMMNGDRALRAEFEGNRVVKLFTRIHEDEPLAADNYVLASGSFFSNGLVAEFERIYEPVFGADIVQTERFDPSDHFTWTTRRFSAPQPYQSAGVVINTDCRVQKCGRFFDNLYAAGAVIGGFNGIELGCGSGVAVVTALTVADEIAEKSGG</sequence>
<protein>
    <recommendedName>
        <fullName evidence="1">Anaerobic glycerol-3-phosphate dehydrogenase subunit B</fullName>
        <shortName evidence="1">Anaerobic G-3-P dehydrogenase subunit B</shortName>
        <shortName evidence="1">Anaerobic G3Pdhase B</shortName>
        <ecNumber evidence="1">1.1.5.3</ecNumber>
    </recommendedName>
</protein>
<name>GLPB_ACTSZ</name>
<accession>A6VKT7</accession>
<dbReference type="EC" id="1.1.5.3" evidence="1"/>
<dbReference type="EMBL" id="CP000746">
    <property type="protein sequence ID" value="ABR73584.1"/>
    <property type="molecule type" value="Genomic_DNA"/>
</dbReference>
<dbReference type="RefSeq" id="WP_011978860.1">
    <property type="nucleotide sequence ID" value="NC_009655.1"/>
</dbReference>
<dbReference type="STRING" id="339671.Asuc_0204"/>
<dbReference type="KEGG" id="asu:Asuc_0204"/>
<dbReference type="eggNOG" id="COG3075">
    <property type="taxonomic scope" value="Bacteria"/>
</dbReference>
<dbReference type="HOGENOM" id="CLU_047793_0_0_6"/>
<dbReference type="OrthoDB" id="6395323at2"/>
<dbReference type="UniPathway" id="UPA00618">
    <property type="reaction ID" value="UER00673"/>
</dbReference>
<dbReference type="Proteomes" id="UP000001114">
    <property type="component" value="Chromosome"/>
</dbReference>
<dbReference type="GO" id="GO:0009331">
    <property type="term" value="C:glycerol-3-phosphate dehydrogenase (FAD) complex"/>
    <property type="evidence" value="ECO:0007669"/>
    <property type="project" value="InterPro"/>
</dbReference>
<dbReference type="GO" id="GO:0004368">
    <property type="term" value="F:glycerol-3-phosphate dehydrogenase (quinone) activity"/>
    <property type="evidence" value="ECO:0007669"/>
    <property type="project" value="UniProtKB-UniRule"/>
</dbReference>
<dbReference type="GO" id="GO:0019563">
    <property type="term" value="P:glycerol catabolic process"/>
    <property type="evidence" value="ECO:0007669"/>
    <property type="project" value="UniProtKB-UniRule"/>
</dbReference>
<dbReference type="Gene3D" id="3.50.50.60">
    <property type="entry name" value="FAD/NAD(P)-binding domain"/>
    <property type="match status" value="1"/>
</dbReference>
<dbReference type="HAMAP" id="MF_00753">
    <property type="entry name" value="Glycerol3P_GlpB"/>
    <property type="match status" value="1"/>
</dbReference>
<dbReference type="InterPro" id="IPR003953">
    <property type="entry name" value="FAD-dep_OxRdtase_2_FAD-bd"/>
</dbReference>
<dbReference type="InterPro" id="IPR050315">
    <property type="entry name" value="FAD-oxidoreductase_2"/>
</dbReference>
<dbReference type="InterPro" id="IPR036188">
    <property type="entry name" value="FAD/NAD-bd_sf"/>
</dbReference>
<dbReference type="InterPro" id="IPR009158">
    <property type="entry name" value="G3P_DH_GlpB_su"/>
</dbReference>
<dbReference type="NCBIfam" id="TIGR03378">
    <property type="entry name" value="glycerol3P_GlpB"/>
    <property type="match status" value="1"/>
</dbReference>
<dbReference type="NCBIfam" id="NF003718">
    <property type="entry name" value="PRK05329.1-1"/>
    <property type="match status" value="1"/>
</dbReference>
<dbReference type="NCBIfam" id="NF003719">
    <property type="entry name" value="PRK05329.1-2"/>
    <property type="match status" value="1"/>
</dbReference>
<dbReference type="NCBIfam" id="NF003720">
    <property type="entry name" value="PRK05329.1-3"/>
    <property type="match status" value="1"/>
</dbReference>
<dbReference type="NCBIfam" id="NF003721">
    <property type="entry name" value="PRK05329.1-4"/>
    <property type="match status" value="1"/>
</dbReference>
<dbReference type="PANTHER" id="PTHR43400:SF11">
    <property type="entry name" value="ANAEROBIC GLYCEROL-3-PHOSPHATE DEHYDROGENASE SUBUNIT B"/>
    <property type="match status" value="1"/>
</dbReference>
<dbReference type="PANTHER" id="PTHR43400">
    <property type="entry name" value="FUMARATE REDUCTASE"/>
    <property type="match status" value="1"/>
</dbReference>
<dbReference type="Pfam" id="PF00890">
    <property type="entry name" value="FAD_binding_2"/>
    <property type="match status" value="1"/>
</dbReference>
<dbReference type="PIRSF" id="PIRSF000141">
    <property type="entry name" value="Anaerobic_G3P_dh"/>
    <property type="match status" value="1"/>
</dbReference>
<dbReference type="SUPFAM" id="SSF51905">
    <property type="entry name" value="FAD/NAD(P)-binding domain"/>
    <property type="match status" value="1"/>
</dbReference>
<reference key="1">
    <citation type="journal article" date="2010" name="BMC Genomics">
        <title>A genomic perspective on the potential of Actinobacillus succinogenes for industrial succinate production.</title>
        <authorList>
            <person name="McKinlay J.B."/>
            <person name="Laivenieks M."/>
            <person name="Schindler B.D."/>
            <person name="McKinlay A.A."/>
            <person name="Siddaramappa S."/>
            <person name="Challacombe J.F."/>
            <person name="Lowry S.R."/>
            <person name="Clum A."/>
            <person name="Lapidus A.L."/>
            <person name="Burkhart K.B."/>
            <person name="Harkins V."/>
            <person name="Vieille C."/>
        </authorList>
    </citation>
    <scope>NUCLEOTIDE SEQUENCE [LARGE SCALE GENOMIC DNA]</scope>
    <source>
        <strain>ATCC 55618 / DSM 22257 / CCUG 43843 / 130Z</strain>
    </source>
</reference>